<comment type="function">
    <text evidence="1 2">Protein N-lysine methyltransferase that specifically trimethylates 'Lys-315' of VCP/p97; this modification may decrease VCP ATPase activity.</text>
</comment>
<comment type="catalytic activity">
    <reaction evidence="1 2">
        <text>L-lysyl-[protein] + 3 S-adenosyl-L-methionine = N(6),N(6),N(6)-trimethyl-L-lysyl-[protein] + 3 S-adenosyl-L-homocysteine + 3 H(+)</text>
        <dbReference type="Rhea" id="RHEA:54192"/>
        <dbReference type="Rhea" id="RHEA-COMP:9752"/>
        <dbReference type="Rhea" id="RHEA-COMP:13826"/>
        <dbReference type="ChEBI" id="CHEBI:15378"/>
        <dbReference type="ChEBI" id="CHEBI:29969"/>
        <dbReference type="ChEBI" id="CHEBI:57856"/>
        <dbReference type="ChEBI" id="CHEBI:59789"/>
        <dbReference type="ChEBI" id="CHEBI:61961"/>
    </reaction>
    <physiologicalReaction direction="left-to-right" evidence="8">
        <dbReference type="Rhea" id="RHEA:54193"/>
    </physiologicalReaction>
</comment>
<comment type="subunit">
    <text evidence="1 2">Interacts with ALKBH6. Interacts with ASPSCR1 and UBXN6; interaction with ASPSCR1, but not with UBXN6, enhances VCP methylation.</text>
</comment>
<comment type="interaction">
    <interactant intactId="EBI-18393784">
        <id>Q9H867</id>
    </interactant>
    <interactant intactId="EBI-11530605">
        <id>Q9H257-2</id>
        <label>CARD9</label>
    </interactant>
    <organismsDiffer>false</organismsDiffer>
    <experiments>3</experiments>
</comment>
<comment type="subcellular location">
    <subcellularLocation>
        <location evidence="2">Cytoplasm</location>
    </subcellularLocation>
</comment>
<comment type="alternative products">
    <event type="alternative splicing"/>
    <isoform>
        <id>Q9H867-4</id>
        <name>4</name>
        <sequence type="displayed"/>
    </isoform>
    <isoform>
        <id>Q9H867-1</id>
        <name>1</name>
        <sequence type="described" ref="VSP_026586 VSP_026587"/>
    </isoform>
    <isoform>
        <id>Q9H867-2</id>
        <name>2</name>
        <sequence type="described" ref="VSP_008814 VSP_008816"/>
    </isoform>
    <isoform>
        <id>Q9H867-3</id>
        <name>3</name>
        <sequence type="described" ref="VSP_008815"/>
    </isoform>
    <isoform>
        <id>Q9H867-5</id>
        <name>5</name>
        <sequence type="described" ref="VSP_043258"/>
    </isoform>
</comment>
<comment type="similarity">
    <text evidence="7">Belongs to the methyltransferase superfamily. METTL21 family.</text>
</comment>
<comment type="sequence caution" evidence="7">
    <conflict type="erroneous initiation">
        <sequence resource="EMBL-CDS" id="CAD62329"/>
    </conflict>
    <text>Extended N-terminus.</text>
</comment>
<proteinExistence type="evidence at protein level"/>
<dbReference type="EC" id="2.1.1.-" evidence="1 2"/>
<dbReference type="EMBL" id="AK023982">
    <property type="protein sequence ID" value="BAB14752.1"/>
    <property type="molecule type" value="mRNA"/>
</dbReference>
<dbReference type="EMBL" id="AK129564">
    <property type="protein sequence ID" value="BAC85183.1"/>
    <property type="molecule type" value="mRNA"/>
</dbReference>
<dbReference type="EMBL" id="BX247997">
    <property type="protein sequence ID" value="CAD62329.1"/>
    <property type="status" value="ALT_INIT"/>
    <property type="molecule type" value="mRNA"/>
</dbReference>
<dbReference type="EMBL" id="AL109758">
    <property type="status" value="NOT_ANNOTATED_CDS"/>
    <property type="molecule type" value="Genomic_DNA"/>
</dbReference>
<dbReference type="EMBL" id="BC027585">
    <property type="status" value="NOT_ANNOTATED_CDS"/>
    <property type="molecule type" value="mRNA"/>
</dbReference>
<dbReference type="EMBL" id="BC105118">
    <property type="protein sequence ID" value="AAI05119.1"/>
    <property type="molecule type" value="mRNA"/>
</dbReference>
<dbReference type="EMBL" id="BC143673">
    <property type="protein sequence ID" value="AAI43674.1"/>
    <property type="molecule type" value="mRNA"/>
</dbReference>
<dbReference type="EMBL" id="BC143674">
    <property type="protein sequence ID" value="AAI43675.1"/>
    <property type="molecule type" value="mRNA"/>
</dbReference>
<dbReference type="CCDS" id="CCDS41951.1">
    <molecule id="Q9H867-5"/>
</dbReference>
<dbReference type="CCDS" id="CCDS9696.2">
    <molecule id="Q9H867-4"/>
</dbReference>
<dbReference type="RefSeq" id="NP_001035752.1">
    <molecule id="Q9H867-5"/>
    <property type="nucleotide sequence ID" value="NM_001040662.2"/>
</dbReference>
<dbReference type="RefSeq" id="NP_078834.2">
    <molecule id="Q9H867-4"/>
    <property type="nucleotide sequence ID" value="NM_024558.3"/>
</dbReference>
<dbReference type="PDB" id="4LG1">
    <property type="method" value="X-ray"/>
    <property type="resolution" value="1.80 A"/>
    <property type="chains" value="A/B/C=7-229"/>
</dbReference>
<dbReference type="PDB" id="7OAT">
    <property type="method" value="X-ray"/>
    <property type="resolution" value="3.00 A"/>
    <property type="chains" value="C=7-229"/>
</dbReference>
<dbReference type="PDB" id="8HL6">
    <property type="method" value="X-ray"/>
    <property type="resolution" value="1.80 A"/>
    <property type="chains" value="A=1-229"/>
</dbReference>
<dbReference type="PDB" id="8HL7">
    <property type="method" value="X-ray"/>
    <property type="resolution" value="2.80 A"/>
    <property type="chains" value="A=16-222"/>
</dbReference>
<dbReference type="PDBsum" id="4LG1"/>
<dbReference type="PDBsum" id="7OAT"/>
<dbReference type="PDBsum" id="8HL6"/>
<dbReference type="PDBsum" id="8HL7"/>
<dbReference type="SMR" id="Q9H867"/>
<dbReference type="BioGRID" id="122744">
    <property type="interactions" value="17"/>
</dbReference>
<dbReference type="FunCoup" id="Q9H867">
    <property type="interactions" value="937"/>
</dbReference>
<dbReference type="IntAct" id="Q9H867">
    <property type="interactions" value="3"/>
</dbReference>
<dbReference type="STRING" id="9606.ENSP00000379201"/>
<dbReference type="ChEMBL" id="CHEMBL3588742"/>
<dbReference type="GlyGen" id="Q9H867">
    <property type="glycosylation" value="1 site, 1 O-linked glycan (1 site)"/>
</dbReference>
<dbReference type="iPTMnet" id="Q9H867"/>
<dbReference type="PhosphoSitePlus" id="Q9H867"/>
<dbReference type="BioMuta" id="VCPKMT"/>
<dbReference type="DMDM" id="152031572"/>
<dbReference type="jPOST" id="Q9H867"/>
<dbReference type="MassIVE" id="Q9H867"/>
<dbReference type="PaxDb" id="9606-ENSP00000379201"/>
<dbReference type="PeptideAtlas" id="Q9H867"/>
<dbReference type="ProteomicsDB" id="81183">
    <molecule id="Q9H867-4"/>
</dbReference>
<dbReference type="ProteomicsDB" id="81184">
    <molecule id="Q9H867-1"/>
</dbReference>
<dbReference type="ProteomicsDB" id="81185">
    <molecule id="Q9H867-2"/>
</dbReference>
<dbReference type="ProteomicsDB" id="81186">
    <molecule id="Q9H867-3"/>
</dbReference>
<dbReference type="ProteomicsDB" id="81187">
    <molecule id="Q9H867-5"/>
</dbReference>
<dbReference type="Pumba" id="Q9H867"/>
<dbReference type="Antibodypedia" id="10369">
    <property type="antibodies" value="18 antibodies from 11 providers"/>
</dbReference>
<dbReference type="DNASU" id="79609"/>
<dbReference type="Ensembl" id="ENST00000395859.2">
    <molecule id="Q9H867-5"/>
    <property type="protein sequence ID" value="ENSP00000379200.2"/>
    <property type="gene ID" value="ENSG00000100483.14"/>
</dbReference>
<dbReference type="Ensembl" id="ENST00000395860.7">
    <molecule id="Q9H867-4"/>
    <property type="protein sequence ID" value="ENSP00000379201.2"/>
    <property type="gene ID" value="ENSG00000100483.14"/>
</dbReference>
<dbReference type="Ensembl" id="ENST00000491402.5">
    <molecule id="Q9H867-1"/>
    <property type="protein sequence ID" value="ENSP00000437113.1"/>
    <property type="gene ID" value="ENSG00000100483.14"/>
</dbReference>
<dbReference type="GeneID" id="79609"/>
<dbReference type="KEGG" id="hsa:79609"/>
<dbReference type="MANE-Select" id="ENST00000395860.7">
    <property type="protein sequence ID" value="ENSP00000379201.2"/>
    <property type="RefSeq nucleotide sequence ID" value="NM_024558.3"/>
    <property type="RefSeq protein sequence ID" value="NP_078834.2"/>
</dbReference>
<dbReference type="UCSC" id="uc001wxo.2">
    <molecule id="Q9H867-4"/>
    <property type="organism name" value="human"/>
</dbReference>
<dbReference type="AGR" id="HGNC:20352"/>
<dbReference type="CTD" id="79609"/>
<dbReference type="DisGeNET" id="79609"/>
<dbReference type="GeneCards" id="VCPKMT"/>
<dbReference type="HGNC" id="HGNC:20352">
    <property type="gene designation" value="VCPKMT"/>
</dbReference>
<dbReference type="HPA" id="ENSG00000100483">
    <property type="expression patterns" value="Low tissue specificity"/>
</dbReference>
<dbReference type="MIM" id="615260">
    <property type="type" value="gene"/>
</dbReference>
<dbReference type="neXtProt" id="NX_Q9H867"/>
<dbReference type="OpenTargets" id="ENSG00000100483"/>
<dbReference type="PharmGKB" id="PA134866014"/>
<dbReference type="VEuPathDB" id="HostDB:ENSG00000100483"/>
<dbReference type="eggNOG" id="KOG2793">
    <property type="taxonomic scope" value="Eukaryota"/>
</dbReference>
<dbReference type="GeneTree" id="ENSGT00940000157135"/>
<dbReference type="HOGENOM" id="CLU_1890393_0_0_1"/>
<dbReference type="InParanoid" id="Q9H867"/>
<dbReference type="OMA" id="RRADMRF"/>
<dbReference type="OrthoDB" id="413520at2759"/>
<dbReference type="PAN-GO" id="Q9H867">
    <property type="GO annotations" value="4 GO annotations based on evolutionary models"/>
</dbReference>
<dbReference type="PhylomeDB" id="Q9H867"/>
<dbReference type="TreeFam" id="TF352990"/>
<dbReference type="PathwayCommons" id="Q9H867"/>
<dbReference type="Reactome" id="R-HSA-8876725">
    <property type="pathway name" value="Protein methylation"/>
</dbReference>
<dbReference type="SignaLink" id="Q9H867"/>
<dbReference type="SIGNOR" id="Q9H867"/>
<dbReference type="BioGRID-ORCS" id="79609">
    <property type="hits" value="21 hits in 1133 CRISPR screens"/>
</dbReference>
<dbReference type="ChiTaRS" id="VCPKMT">
    <property type="organism name" value="human"/>
</dbReference>
<dbReference type="EvolutionaryTrace" id="Q9H867"/>
<dbReference type="GenomeRNAi" id="79609"/>
<dbReference type="Pharos" id="Q9H867">
    <property type="development level" value="Tbio"/>
</dbReference>
<dbReference type="PRO" id="PR:Q9H867"/>
<dbReference type="Proteomes" id="UP000005640">
    <property type="component" value="Chromosome 14"/>
</dbReference>
<dbReference type="RNAct" id="Q9H867">
    <property type="molecule type" value="protein"/>
</dbReference>
<dbReference type="Bgee" id="ENSG00000100483">
    <property type="expression patterns" value="Expressed in endothelial cell and 191 other cell types or tissues"/>
</dbReference>
<dbReference type="GO" id="GO:0005737">
    <property type="term" value="C:cytoplasm"/>
    <property type="evidence" value="ECO:0000314"/>
    <property type="project" value="UniProtKB"/>
</dbReference>
<dbReference type="GO" id="GO:0005829">
    <property type="term" value="C:cytosol"/>
    <property type="evidence" value="ECO:0000314"/>
    <property type="project" value="HPA"/>
</dbReference>
<dbReference type="GO" id="GO:0032991">
    <property type="term" value="C:protein-containing complex"/>
    <property type="evidence" value="ECO:0000314"/>
    <property type="project" value="UniProtKB"/>
</dbReference>
<dbReference type="GO" id="GO:0051117">
    <property type="term" value="F:ATPase binding"/>
    <property type="evidence" value="ECO:0000353"/>
    <property type="project" value="UniProtKB"/>
</dbReference>
<dbReference type="GO" id="GO:0016279">
    <property type="term" value="F:protein-lysine N-methyltransferase activity"/>
    <property type="evidence" value="ECO:0000314"/>
    <property type="project" value="UniProtKB"/>
</dbReference>
<dbReference type="GO" id="GO:0032780">
    <property type="term" value="P:negative regulation of ATP-dependent activity"/>
    <property type="evidence" value="ECO:0000315"/>
    <property type="project" value="UniProtKB"/>
</dbReference>
<dbReference type="GO" id="GO:0018022">
    <property type="term" value="P:peptidyl-lysine methylation"/>
    <property type="evidence" value="ECO:0000315"/>
    <property type="project" value="UniProtKB"/>
</dbReference>
<dbReference type="GO" id="GO:0018023">
    <property type="term" value="P:peptidyl-lysine trimethylation"/>
    <property type="evidence" value="ECO:0000314"/>
    <property type="project" value="UniProtKB"/>
</dbReference>
<dbReference type="CDD" id="cd02440">
    <property type="entry name" value="AdoMet_MTases"/>
    <property type="match status" value="1"/>
</dbReference>
<dbReference type="FunFam" id="3.40.50.150:FF:000134">
    <property type="entry name" value="protein-lysine methyltransferase METTL21D isoform X1"/>
    <property type="match status" value="1"/>
</dbReference>
<dbReference type="Gene3D" id="3.40.50.150">
    <property type="entry name" value="Vaccinia Virus protein VP39"/>
    <property type="match status" value="1"/>
</dbReference>
<dbReference type="InterPro" id="IPR019410">
    <property type="entry name" value="Methyltransf_16"/>
</dbReference>
<dbReference type="InterPro" id="IPR029063">
    <property type="entry name" value="SAM-dependent_MTases_sf"/>
</dbReference>
<dbReference type="PANTHER" id="PTHR14614">
    <property type="entry name" value="HEPATOCELLULAR CARCINOMA-ASSOCIATED ANTIGEN"/>
    <property type="match status" value="1"/>
</dbReference>
<dbReference type="PANTHER" id="PTHR14614:SF158">
    <property type="entry name" value="PROTEIN N-LYSINE METHYLTRANSFERASE METTL21D"/>
    <property type="match status" value="1"/>
</dbReference>
<dbReference type="Pfam" id="PF10294">
    <property type="entry name" value="Methyltransf_16"/>
    <property type="match status" value="1"/>
</dbReference>
<dbReference type="SUPFAM" id="SSF53335">
    <property type="entry name" value="S-adenosyl-L-methionine-dependent methyltransferases"/>
    <property type="match status" value="1"/>
</dbReference>
<protein>
    <recommendedName>
        <fullName>Protein N-lysine methyltransferase METTL21D</fullName>
        <ecNumber evidence="1 2">2.1.1.-</ecNumber>
    </recommendedName>
    <alternativeName>
        <fullName>Methyltransferase-like protein 21D</fullName>
    </alternativeName>
    <alternativeName>
        <fullName>VCP lysine methyltransferase</fullName>
        <shortName>VCP-KMT</shortName>
    </alternativeName>
    <alternativeName>
        <fullName>Valosin-containing protein lysine methyltransferase</fullName>
    </alternativeName>
</protein>
<accession>Q9H867</accession>
<accession>B7ZLA3</accession>
<accession>B7ZLA4</accession>
<accession>Q2M2X3</accession>
<accession>Q86T12</accession>
<reference key="1">
    <citation type="journal article" date="2004" name="Nat. Genet.">
        <title>Complete sequencing and characterization of 21,243 full-length human cDNAs.</title>
        <authorList>
            <person name="Ota T."/>
            <person name="Suzuki Y."/>
            <person name="Nishikawa T."/>
            <person name="Otsuki T."/>
            <person name="Sugiyama T."/>
            <person name="Irie R."/>
            <person name="Wakamatsu A."/>
            <person name="Hayashi K."/>
            <person name="Sato H."/>
            <person name="Nagai K."/>
            <person name="Kimura K."/>
            <person name="Makita H."/>
            <person name="Sekine M."/>
            <person name="Obayashi M."/>
            <person name="Nishi T."/>
            <person name="Shibahara T."/>
            <person name="Tanaka T."/>
            <person name="Ishii S."/>
            <person name="Yamamoto J."/>
            <person name="Saito K."/>
            <person name="Kawai Y."/>
            <person name="Isono Y."/>
            <person name="Nakamura Y."/>
            <person name="Nagahari K."/>
            <person name="Murakami K."/>
            <person name="Yasuda T."/>
            <person name="Iwayanagi T."/>
            <person name="Wagatsuma M."/>
            <person name="Shiratori A."/>
            <person name="Sudo H."/>
            <person name="Hosoiri T."/>
            <person name="Kaku Y."/>
            <person name="Kodaira H."/>
            <person name="Kondo H."/>
            <person name="Sugawara M."/>
            <person name="Takahashi M."/>
            <person name="Kanda K."/>
            <person name="Yokoi T."/>
            <person name="Furuya T."/>
            <person name="Kikkawa E."/>
            <person name="Omura Y."/>
            <person name="Abe K."/>
            <person name="Kamihara K."/>
            <person name="Katsuta N."/>
            <person name="Sato K."/>
            <person name="Tanikawa M."/>
            <person name="Yamazaki M."/>
            <person name="Ninomiya K."/>
            <person name="Ishibashi T."/>
            <person name="Yamashita H."/>
            <person name="Murakawa K."/>
            <person name="Fujimori K."/>
            <person name="Tanai H."/>
            <person name="Kimata M."/>
            <person name="Watanabe M."/>
            <person name="Hiraoka S."/>
            <person name="Chiba Y."/>
            <person name="Ishida S."/>
            <person name="Ono Y."/>
            <person name="Takiguchi S."/>
            <person name="Watanabe S."/>
            <person name="Yosida M."/>
            <person name="Hotuta T."/>
            <person name="Kusano J."/>
            <person name="Kanehori K."/>
            <person name="Takahashi-Fujii A."/>
            <person name="Hara H."/>
            <person name="Tanase T.-O."/>
            <person name="Nomura Y."/>
            <person name="Togiya S."/>
            <person name="Komai F."/>
            <person name="Hara R."/>
            <person name="Takeuchi K."/>
            <person name="Arita M."/>
            <person name="Imose N."/>
            <person name="Musashino K."/>
            <person name="Yuuki H."/>
            <person name="Oshima A."/>
            <person name="Sasaki N."/>
            <person name="Aotsuka S."/>
            <person name="Yoshikawa Y."/>
            <person name="Matsunawa H."/>
            <person name="Ichihara T."/>
            <person name="Shiohata N."/>
            <person name="Sano S."/>
            <person name="Moriya S."/>
            <person name="Momiyama H."/>
            <person name="Satoh N."/>
            <person name="Takami S."/>
            <person name="Terashima Y."/>
            <person name="Suzuki O."/>
            <person name="Nakagawa S."/>
            <person name="Senoh A."/>
            <person name="Mizoguchi H."/>
            <person name="Goto Y."/>
            <person name="Shimizu F."/>
            <person name="Wakebe H."/>
            <person name="Hishigaki H."/>
            <person name="Watanabe T."/>
            <person name="Sugiyama A."/>
            <person name="Takemoto M."/>
            <person name="Kawakami B."/>
            <person name="Yamazaki M."/>
            <person name="Watanabe K."/>
            <person name="Kumagai A."/>
            <person name="Itakura S."/>
            <person name="Fukuzumi Y."/>
            <person name="Fujimori Y."/>
            <person name="Komiyama M."/>
            <person name="Tashiro H."/>
            <person name="Tanigami A."/>
            <person name="Fujiwara T."/>
            <person name="Ono T."/>
            <person name="Yamada K."/>
            <person name="Fujii Y."/>
            <person name="Ozaki K."/>
            <person name="Hirao M."/>
            <person name="Ohmori Y."/>
            <person name="Kawabata A."/>
            <person name="Hikiji T."/>
            <person name="Kobatake N."/>
            <person name="Inagaki H."/>
            <person name="Ikema Y."/>
            <person name="Okamoto S."/>
            <person name="Okitani R."/>
            <person name="Kawakami T."/>
            <person name="Noguchi S."/>
            <person name="Itoh T."/>
            <person name="Shigeta K."/>
            <person name="Senba T."/>
            <person name="Matsumura K."/>
            <person name="Nakajima Y."/>
            <person name="Mizuno T."/>
            <person name="Morinaga M."/>
            <person name="Sasaki M."/>
            <person name="Togashi T."/>
            <person name="Oyama M."/>
            <person name="Hata H."/>
            <person name="Watanabe M."/>
            <person name="Komatsu T."/>
            <person name="Mizushima-Sugano J."/>
            <person name="Satoh T."/>
            <person name="Shirai Y."/>
            <person name="Takahashi Y."/>
            <person name="Nakagawa K."/>
            <person name="Okumura K."/>
            <person name="Nagase T."/>
            <person name="Nomura N."/>
            <person name="Kikuchi H."/>
            <person name="Masuho Y."/>
            <person name="Yamashita R."/>
            <person name="Nakai K."/>
            <person name="Yada T."/>
            <person name="Nakamura Y."/>
            <person name="Ohara O."/>
            <person name="Isogai T."/>
            <person name="Sugano S."/>
        </authorList>
    </citation>
    <scope>NUCLEOTIDE SEQUENCE [LARGE SCALE MRNA] (ISOFORMS 1 AND 2)</scope>
    <source>
        <tissue>Prostate</tissue>
        <tissue>Retinoblastoma</tissue>
    </source>
</reference>
<reference key="2">
    <citation type="submission" date="2003-02" db="EMBL/GenBank/DDBJ databases">
        <title>Full-length cDNA libraries and normalization.</title>
        <authorList>
            <person name="Li W.B."/>
            <person name="Gruber C."/>
            <person name="Jessee J."/>
            <person name="Polayes D."/>
        </authorList>
    </citation>
    <scope>NUCLEOTIDE SEQUENCE [LARGE SCALE MRNA] (ISOFORM 3)</scope>
    <source>
        <tissue>T-cell</tissue>
    </source>
</reference>
<reference key="3">
    <citation type="journal article" date="2003" name="Nature">
        <title>The DNA sequence and analysis of human chromosome 14.</title>
        <authorList>
            <person name="Heilig R."/>
            <person name="Eckenberg R."/>
            <person name="Petit J.-L."/>
            <person name="Fonknechten N."/>
            <person name="Da Silva C."/>
            <person name="Cattolico L."/>
            <person name="Levy M."/>
            <person name="Barbe V."/>
            <person name="De Berardinis V."/>
            <person name="Ureta-Vidal A."/>
            <person name="Pelletier E."/>
            <person name="Vico V."/>
            <person name="Anthouard V."/>
            <person name="Rowen L."/>
            <person name="Madan A."/>
            <person name="Qin S."/>
            <person name="Sun H."/>
            <person name="Du H."/>
            <person name="Pepin K."/>
            <person name="Artiguenave F."/>
            <person name="Robert C."/>
            <person name="Cruaud C."/>
            <person name="Bruels T."/>
            <person name="Jaillon O."/>
            <person name="Friedlander L."/>
            <person name="Samson G."/>
            <person name="Brottier P."/>
            <person name="Cure S."/>
            <person name="Segurens B."/>
            <person name="Aniere F."/>
            <person name="Samain S."/>
            <person name="Crespeau H."/>
            <person name="Abbasi N."/>
            <person name="Aiach N."/>
            <person name="Boscus D."/>
            <person name="Dickhoff R."/>
            <person name="Dors M."/>
            <person name="Dubois I."/>
            <person name="Friedman C."/>
            <person name="Gouyvenoux M."/>
            <person name="James R."/>
            <person name="Madan A."/>
            <person name="Mairey-Estrada B."/>
            <person name="Mangenot S."/>
            <person name="Martins N."/>
            <person name="Menard M."/>
            <person name="Oztas S."/>
            <person name="Ratcliffe A."/>
            <person name="Shaffer T."/>
            <person name="Trask B."/>
            <person name="Vacherie B."/>
            <person name="Bellemere C."/>
            <person name="Belser C."/>
            <person name="Besnard-Gonnet M."/>
            <person name="Bartol-Mavel D."/>
            <person name="Boutard M."/>
            <person name="Briez-Silla S."/>
            <person name="Combette S."/>
            <person name="Dufosse-Laurent V."/>
            <person name="Ferron C."/>
            <person name="Lechaplais C."/>
            <person name="Louesse C."/>
            <person name="Muselet D."/>
            <person name="Magdelenat G."/>
            <person name="Pateau E."/>
            <person name="Petit E."/>
            <person name="Sirvain-Trukniewicz P."/>
            <person name="Trybou A."/>
            <person name="Vega-Czarny N."/>
            <person name="Bataille E."/>
            <person name="Bluet E."/>
            <person name="Bordelais I."/>
            <person name="Dubois M."/>
            <person name="Dumont C."/>
            <person name="Guerin T."/>
            <person name="Haffray S."/>
            <person name="Hammadi R."/>
            <person name="Muanga J."/>
            <person name="Pellouin V."/>
            <person name="Robert D."/>
            <person name="Wunderle E."/>
            <person name="Gauguet G."/>
            <person name="Roy A."/>
            <person name="Sainte-Marthe L."/>
            <person name="Verdier J."/>
            <person name="Verdier-Discala C."/>
            <person name="Hillier L.W."/>
            <person name="Fulton L."/>
            <person name="McPherson J."/>
            <person name="Matsuda F."/>
            <person name="Wilson R."/>
            <person name="Scarpelli C."/>
            <person name="Gyapay G."/>
            <person name="Wincker P."/>
            <person name="Saurin W."/>
            <person name="Quetier F."/>
            <person name="Waterston R."/>
            <person name="Hood L."/>
            <person name="Weissenbach J."/>
        </authorList>
    </citation>
    <scope>NUCLEOTIDE SEQUENCE [LARGE SCALE GENOMIC DNA]</scope>
</reference>
<reference key="4">
    <citation type="journal article" date="2004" name="Genome Res.">
        <title>The status, quality, and expansion of the NIH full-length cDNA project: the Mammalian Gene Collection (MGC).</title>
        <authorList>
            <consortium name="The MGC Project Team"/>
        </authorList>
    </citation>
    <scope>NUCLEOTIDE SEQUENCE [LARGE SCALE MRNA] (ISOFORMS 1; 4 AND 5)</scope>
    <source>
        <tissue>Brain</tissue>
        <tissue>Testis</tissue>
    </source>
</reference>
<reference key="5">
    <citation type="journal article" date="2012" name="Nat. Commun.">
        <title>Lysine methylation of VCP by a member of a novel human protein methyltransferase family.</title>
        <authorList>
            <person name="Kernstock S."/>
            <person name="Davydova E."/>
            <person name="Jakobsson M."/>
            <person name="Moen A."/>
            <person name="Pettersen S."/>
            <person name="Maelandsmo G.M."/>
            <person name="Egge-Jacobsen W."/>
            <person name="Falnes P.O."/>
        </authorList>
    </citation>
    <scope>FUNCTION</scope>
    <scope>CATALYTIC ACTIVITY</scope>
    <scope>INTERACTION WITH ALKBH6</scope>
    <scope>MUTAGENESIS OF ASP-96 AND ASP-144</scope>
</reference>
<reference key="6">
    <citation type="journal article" date="2012" name="Proc. Natl. Acad. Sci. U.S.A.">
        <title>N-terminal acetylome analyses and functional insights of the N-terminal acetyltransferase NatB.</title>
        <authorList>
            <person name="Van Damme P."/>
            <person name="Lasa M."/>
            <person name="Polevoda B."/>
            <person name="Gazquez C."/>
            <person name="Elosegui-Artola A."/>
            <person name="Kim D.S."/>
            <person name="De Juan-Pardo E."/>
            <person name="Demeyer K."/>
            <person name="Hole K."/>
            <person name="Larrea E."/>
            <person name="Timmerman E."/>
            <person name="Prieto J."/>
            <person name="Arnesen T."/>
            <person name="Sherman F."/>
            <person name="Gevaert K."/>
            <person name="Aldabe R."/>
        </authorList>
    </citation>
    <scope>ACETYLATION [LARGE SCALE ANALYSIS] AT ALA-2</scope>
    <scope>CLEAVAGE OF INITIATOR METHIONINE [LARGE SCALE ANALYSIS]</scope>
    <scope>IDENTIFICATION BY MASS SPECTROMETRY [LARGE SCALE ANALYSIS]</scope>
</reference>
<reference key="7">
    <citation type="journal article" date="2013" name="J. Proteome Res.">
        <title>Toward a comprehensive characterization of a human cancer cell phosphoproteome.</title>
        <authorList>
            <person name="Zhou H."/>
            <person name="Di Palma S."/>
            <person name="Preisinger C."/>
            <person name="Peng M."/>
            <person name="Polat A.N."/>
            <person name="Heck A.J."/>
            <person name="Mohammed S."/>
        </authorList>
    </citation>
    <scope>PHOSPHORYLATION [LARGE SCALE ANALYSIS] AT SER-8</scope>
    <scope>IDENTIFICATION BY MASS SPECTROMETRY [LARGE SCALE ANALYSIS]</scope>
    <source>
        <tissue>Cervix carcinoma</tissue>
    </source>
</reference>
<reference key="8">
    <citation type="journal article" date="2013" name="PLoS Genet.">
        <title>A newly uncovered group of distantly related lysine methyltransferases preferentially interact with molecular chaperones to regulate their activity.</title>
        <authorList>
            <person name="Cloutier P."/>
            <person name="Lavallee-Adam M."/>
            <person name="Faubert D."/>
            <person name="Blanchette M."/>
            <person name="Coulombe B."/>
        </authorList>
    </citation>
    <scope>FUNCTION</scope>
    <scope>CATALYTIC ACTIVITY</scope>
    <scope>INTERACTION WITH ASPSCR1 AND UBXN6</scope>
    <scope>SUBCELLULAR LOCATION</scope>
    <scope>MUTAGENESIS OF GLU-73</scope>
</reference>
<reference key="9">
    <citation type="submission" date="2013-06" db="PDB data bank">
        <title>The crystal structure of human methyltransferase-like protein 21D in complex with SAM.</title>
        <authorList>
            <person name="Zeng H."/>
            <person name="Dong A."/>
            <person name="Fenner M."/>
            <person name="Bountra C."/>
            <person name="Arrowsmith C.H."/>
            <person name="Edwards A.M."/>
            <person name="Brown P.J."/>
            <person name="Wu H."/>
        </authorList>
    </citation>
    <scope>X-RAY CRYSTALLOGRAPHY (1.80 ANGSTROMS) OF 7-229 IN COMPLEX WITH S-ADENOSYL-L-METHIONINE</scope>
</reference>
<gene>
    <name type="primary">VCPKMT</name>
    <name type="synonym">C14orf138</name>
    <name type="synonym">METTL21D</name>
</gene>
<sequence>MADTLESSLEDPLRSFVRVLEKRDGTVLRLQQYSSGGVGCVVWDAAIVLSKYLETPEFSGDGAHALSRRSVLELGSGTGAVGLMAATLGADVVVTDLEELQDLLKMNINMNKHLVTGSVQAKVLKWGEEIEGFPSPPDFILMADCIYYEESLEPLLKTLKDISGFETCIICCYEQRTMGKNPEIEKKYFELLQLDFDFEKIPLEKHDEEYRSEDIHIIYIRKKKSKFPS</sequence>
<organism>
    <name type="scientific">Homo sapiens</name>
    <name type="common">Human</name>
    <dbReference type="NCBI Taxonomy" id="9606"/>
    <lineage>
        <taxon>Eukaryota</taxon>
        <taxon>Metazoa</taxon>
        <taxon>Chordata</taxon>
        <taxon>Craniata</taxon>
        <taxon>Vertebrata</taxon>
        <taxon>Euteleostomi</taxon>
        <taxon>Mammalia</taxon>
        <taxon>Eutheria</taxon>
        <taxon>Euarchontoglires</taxon>
        <taxon>Primates</taxon>
        <taxon>Haplorrhini</taxon>
        <taxon>Catarrhini</taxon>
        <taxon>Hominidae</taxon>
        <taxon>Homo</taxon>
    </lineage>
</organism>
<feature type="initiator methionine" description="Removed" evidence="9">
    <location>
        <position position="1"/>
    </location>
</feature>
<feature type="chain" id="PRO_0000089937" description="Protein N-lysine methyltransferase METTL21D">
    <location>
        <begin position="2"/>
        <end position="229"/>
    </location>
</feature>
<feature type="binding site" evidence="3">
    <location>
        <position position="43"/>
    </location>
    <ligand>
        <name>S-adenosyl-L-methionine</name>
        <dbReference type="ChEBI" id="CHEBI:59789"/>
    </ligand>
</feature>
<feature type="binding site" evidence="3">
    <location>
        <begin position="75"/>
        <end position="77"/>
    </location>
    <ligand>
        <name>S-adenosyl-L-methionine</name>
        <dbReference type="ChEBI" id="CHEBI:59789"/>
    </ligand>
</feature>
<feature type="binding site" evidence="3">
    <location>
        <position position="96"/>
    </location>
    <ligand>
        <name>S-adenosyl-L-methionine</name>
        <dbReference type="ChEBI" id="CHEBI:59789"/>
    </ligand>
</feature>
<feature type="binding site" evidence="3">
    <location>
        <position position="126"/>
    </location>
    <ligand>
        <name>S-adenosyl-L-methionine</name>
        <dbReference type="ChEBI" id="CHEBI:59789"/>
    </ligand>
</feature>
<feature type="binding site" evidence="3">
    <location>
        <position position="143"/>
    </location>
    <ligand>
        <name>S-adenosyl-L-methionine</name>
        <dbReference type="ChEBI" id="CHEBI:59789"/>
    </ligand>
</feature>
<feature type="binding site" evidence="3">
    <location>
        <position position="148"/>
    </location>
    <ligand>
        <name>S-adenosyl-L-methionine</name>
        <dbReference type="ChEBI" id="CHEBI:59789"/>
    </ligand>
</feature>
<feature type="modified residue" description="N-acetylalanine" evidence="9">
    <location>
        <position position="2"/>
    </location>
</feature>
<feature type="modified residue" description="Phosphoserine" evidence="10">
    <location>
        <position position="8"/>
    </location>
</feature>
<feature type="splice variant" id="VSP_008814" description="In isoform 2." evidence="4">
    <original>MADTLESSLEDPLRSFVRVLEKRDGTVLRLQQYSSGGVGCVVWDAAIVLSKYLETPEFSGDGAHALSRRSVLELGSGTGAVGLMAATLG</original>
    <variation>MWGRLLQAFPPVPTPQSTLFYR</variation>
    <location>
        <begin position="1"/>
        <end position="89"/>
    </location>
</feature>
<feature type="splice variant" id="VSP_008815" description="In isoform 3." evidence="6">
    <location>
        <begin position="90"/>
        <end position="229"/>
    </location>
</feature>
<feature type="splice variant" id="VSP_026586" description="In isoform 1." evidence="4 5">
    <original>VLKWGEEIEGFPSPPDFILMAD</original>
    <variation>GGRNRRLSFSTRLHTDGRLHIL</variation>
    <location>
        <begin position="123"/>
        <end position="144"/>
    </location>
</feature>
<feature type="splice variant" id="VSP_026587" description="In isoform 1." evidence="4 5">
    <location>
        <begin position="145"/>
        <end position="229"/>
    </location>
</feature>
<feature type="splice variant" id="VSP_008816" description="In isoform 2." evidence="4">
    <location>
        <begin position="191"/>
        <end position="229"/>
    </location>
</feature>
<feature type="splice variant" id="VSP_043258" description="In isoform 5." evidence="5">
    <location>
        <begin position="191"/>
        <end position="225"/>
    </location>
</feature>
<feature type="sequence variant" id="VAR_059621" description="In dbSNP:rs11157729.">
    <original>A</original>
    <variation>D</variation>
    <location>
        <position position="63"/>
    </location>
</feature>
<feature type="mutagenesis site" description="Loss of methyltransferase activity." evidence="2">
    <original>E</original>
    <variation>Q</variation>
    <location>
        <position position="73"/>
    </location>
</feature>
<feature type="mutagenesis site" description="Loss of methyltransferase activity." evidence="1">
    <original>D</original>
    <variation>A</variation>
    <variation>V</variation>
    <location>
        <position position="96"/>
    </location>
</feature>
<feature type="mutagenesis site" description="Loss of methyltransferase activity." evidence="1">
    <original>D</original>
    <variation>V</variation>
    <location>
        <position position="144"/>
    </location>
</feature>
<feature type="strand" evidence="11">
    <location>
        <begin position="8"/>
        <end position="10"/>
    </location>
</feature>
<feature type="helix" evidence="11">
    <location>
        <begin position="12"/>
        <end position="16"/>
    </location>
</feature>
<feature type="strand" evidence="11">
    <location>
        <begin position="17"/>
        <end position="21"/>
    </location>
</feature>
<feature type="strand" evidence="11">
    <location>
        <begin position="27"/>
        <end position="33"/>
    </location>
</feature>
<feature type="strand" evidence="12">
    <location>
        <begin position="35"/>
        <end position="37"/>
    </location>
</feature>
<feature type="helix" evidence="13">
    <location>
        <begin position="38"/>
        <end position="40"/>
    </location>
</feature>
<feature type="helix" evidence="11">
    <location>
        <begin position="44"/>
        <end position="53"/>
    </location>
</feature>
<feature type="helix" evidence="11">
    <location>
        <begin position="56"/>
        <end position="59"/>
    </location>
</feature>
<feature type="strand" evidence="11">
    <location>
        <begin position="61"/>
        <end position="63"/>
    </location>
</feature>
<feature type="turn" evidence="11">
    <location>
        <begin position="65"/>
        <end position="68"/>
    </location>
</feature>
<feature type="strand" evidence="11">
    <location>
        <begin position="70"/>
        <end position="75"/>
    </location>
</feature>
<feature type="helix" evidence="11">
    <location>
        <begin position="80"/>
        <end position="86"/>
    </location>
</feature>
<feature type="turn" evidence="11">
    <location>
        <begin position="87"/>
        <end position="89"/>
    </location>
</feature>
<feature type="strand" evidence="11">
    <location>
        <begin position="91"/>
        <end position="96"/>
    </location>
</feature>
<feature type="helix" evidence="11">
    <location>
        <begin position="98"/>
        <end position="100"/>
    </location>
</feature>
<feature type="helix" evidence="11">
    <location>
        <begin position="101"/>
        <end position="110"/>
    </location>
</feature>
<feature type="helix" evidence="11">
    <location>
        <begin position="112"/>
        <end position="114"/>
    </location>
</feature>
<feature type="strand" evidence="11">
    <location>
        <begin position="116"/>
        <end position="123"/>
    </location>
</feature>
<feature type="strand" evidence="11">
    <location>
        <begin position="138"/>
        <end position="144"/>
    </location>
</feature>
<feature type="helix" evidence="11">
    <location>
        <begin position="149"/>
        <end position="151"/>
    </location>
</feature>
<feature type="helix" evidence="11">
    <location>
        <begin position="153"/>
        <end position="162"/>
    </location>
</feature>
<feature type="strand" evidence="11">
    <location>
        <begin position="168"/>
        <end position="174"/>
    </location>
</feature>
<feature type="helix" evidence="11">
    <location>
        <begin position="181"/>
        <end position="192"/>
    </location>
</feature>
<feature type="turn" evidence="11">
    <location>
        <begin position="193"/>
        <end position="195"/>
    </location>
</feature>
<feature type="strand" evidence="11">
    <location>
        <begin position="196"/>
        <end position="200"/>
    </location>
</feature>
<feature type="helix" evidence="11">
    <location>
        <begin position="203"/>
        <end position="205"/>
    </location>
</feature>
<feature type="strand" evidence="11">
    <location>
        <begin position="208"/>
        <end position="210"/>
    </location>
</feature>
<feature type="strand" evidence="11">
    <location>
        <begin position="215"/>
        <end position="222"/>
    </location>
</feature>
<keyword id="KW-0002">3D-structure</keyword>
<keyword id="KW-0007">Acetylation</keyword>
<keyword id="KW-0025">Alternative splicing</keyword>
<keyword id="KW-0963">Cytoplasm</keyword>
<keyword id="KW-0489">Methyltransferase</keyword>
<keyword id="KW-0597">Phosphoprotein</keyword>
<keyword id="KW-1267">Proteomics identification</keyword>
<keyword id="KW-1185">Reference proteome</keyword>
<keyword id="KW-0949">S-adenosyl-L-methionine</keyword>
<keyword id="KW-0808">Transferase</keyword>
<evidence type="ECO:0000269" key="1">
    <source>
    </source>
</evidence>
<evidence type="ECO:0000269" key="2">
    <source>
    </source>
</evidence>
<evidence type="ECO:0000269" key="3">
    <source ref="9"/>
</evidence>
<evidence type="ECO:0000303" key="4">
    <source>
    </source>
</evidence>
<evidence type="ECO:0000303" key="5">
    <source>
    </source>
</evidence>
<evidence type="ECO:0000303" key="6">
    <source ref="2"/>
</evidence>
<evidence type="ECO:0000305" key="7"/>
<evidence type="ECO:0000305" key="8">
    <source>
    </source>
</evidence>
<evidence type="ECO:0007744" key="9">
    <source>
    </source>
</evidence>
<evidence type="ECO:0007744" key="10">
    <source>
    </source>
</evidence>
<evidence type="ECO:0007829" key="11">
    <source>
        <dbReference type="PDB" id="4LG1"/>
    </source>
</evidence>
<evidence type="ECO:0007829" key="12">
    <source>
        <dbReference type="PDB" id="8HL6"/>
    </source>
</evidence>
<evidence type="ECO:0007829" key="13">
    <source>
        <dbReference type="PDB" id="8HL7"/>
    </source>
</evidence>
<name>MT21D_HUMAN</name>